<reference key="1">
    <citation type="submission" date="2007-05" db="EMBL/GenBank/DDBJ databases">
        <title>Complete sequence of Thermotoga petrophila RKU-1.</title>
        <authorList>
            <consortium name="US DOE Joint Genome Institute"/>
            <person name="Copeland A."/>
            <person name="Lucas S."/>
            <person name="Lapidus A."/>
            <person name="Barry K."/>
            <person name="Glavina del Rio T."/>
            <person name="Dalin E."/>
            <person name="Tice H."/>
            <person name="Pitluck S."/>
            <person name="Sims D."/>
            <person name="Brettin T."/>
            <person name="Bruce D."/>
            <person name="Detter J.C."/>
            <person name="Han C."/>
            <person name="Tapia R."/>
            <person name="Schmutz J."/>
            <person name="Larimer F."/>
            <person name="Land M."/>
            <person name="Hauser L."/>
            <person name="Kyrpides N."/>
            <person name="Mikhailova N."/>
            <person name="Nelson K."/>
            <person name="Gogarten J.P."/>
            <person name="Noll K."/>
            <person name="Richardson P."/>
        </authorList>
    </citation>
    <scope>NUCLEOTIDE SEQUENCE [LARGE SCALE GENOMIC DNA]</scope>
    <source>
        <strain>ATCC BAA-488 / DSM 13995 / JCM 10881 / RKU-1</strain>
    </source>
</reference>
<dbReference type="EC" id="3.6.1.15" evidence="1"/>
<dbReference type="EMBL" id="CP000702">
    <property type="protein sequence ID" value="ABQ46905.1"/>
    <property type="molecule type" value="Genomic_DNA"/>
</dbReference>
<dbReference type="RefSeq" id="WP_011943465.1">
    <property type="nucleotide sequence ID" value="NC_009486.1"/>
</dbReference>
<dbReference type="SMR" id="A5IL32"/>
<dbReference type="STRING" id="390874.Tpet_0887"/>
<dbReference type="KEGG" id="tpt:Tpet_0887"/>
<dbReference type="eggNOG" id="COG1618">
    <property type="taxonomic scope" value="Bacteria"/>
</dbReference>
<dbReference type="HOGENOM" id="CLU_103145_1_1_0"/>
<dbReference type="Proteomes" id="UP000006558">
    <property type="component" value="Chromosome"/>
</dbReference>
<dbReference type="GO" id="GO:0005524">
    <property type="term" value="F:ATP binding"/>
    <property type="evidence" value="ECO:0007669"/>
    <property type="project" value="UniProtKB-UniRule"/>
</dbReference>
<dbReference type="GO" id="GO:0016887">
    <property type="term" value="F:ATP hydrolysis activity"/>
    <property type="evidence" value="ECO:0007669"/>
    <property type="project" value="InterPro"/>
</dbReference>
<dbReference type="CDD" id="cd19482">
    <property type="entry name" value="RecA-like_Thep1"/>
    <property type="match status" value="1"/>
</dbReference>
<dbReference type="Gene3D" id="3.40.50.300">
    <property type="entry name" value="P-loop containing nucleotide triphosphate hydrolases"/>
    <property type="match status" value="1"/>
</dbReference>
<dbReference type="HAMAP" id="MF_00796">
    <property type="entry name" value="NTPase_1"/>
    <property type="match status" value="1"/>
</dbReference>
<dbReference type="InterPro" id="IPR003593">
    <property type="entry name" value="AAA+_ATPase"/>
</dbReference>
<dbReference type="InterPro" id="IPR004948">
    <property type="entry name" value="Nuc-triphosphatase_THEP1"/>
</dbReference>
<dbReference type="InterPro" id="IPR027417">
    <property type="entry name" value="P-loop_NTPase"/>
</dbReference>
<dbReference type="NCBIfam" id="NF010248">
    <property type="entry name" value="PRK13695.1"/>
    <property type="match status" value="1"/>
</dbReference>
<dbReference type="PANTHER" id="PTHR43146">
    <property type="entry name" value="CANCER-RELATED NUCLEOSIDE-TRIPHOSPHATASE"/>
    <property type="match status" value="1"/>
</dbReference>
<dbReference type="PANTHER" id="PTHR43146:SF1">
    <property type="entry name" value="CANCER-RELATED NUCLEOSIDE-TRIPHOSPHATASE"/>
    <property type="match status" value="1"/>
</dbReference>
<dbReference type="Pfam" id="PF03266">
    <property type="entry name" value="NTPase_1"/>
    <property type="match status" value="1"/>
</dbReference>
<dbReference type="SMART" id="SM00382">
    <property type="entry name" value="AAA"/>
    <property type="match status" value="1"/>
</dbReference>
<dbReference type="SUPFAM" id="SSF52540">
    <property type="entry name" value="P-loop containing nucleoside triphosphate hydrolases"/>
    <property type="match status" value="1"/>
</dbReference>
<comment type="function">
    <text evidence="1">Has nucleotide phosphatase activity towards ATP, GTP, CTP, TTP and UTP. May hydrolyze nucleoside diphosphates with lower efficiency.</text>
</comment>
<comment type="catalytic activity">
    <reaction evidence="1">
        <text>a ribonucleoside 5'-triphosphate + H2O = a ribonucleoside 5'-diphosphate + phosphate + H(+)</text>
        <dbReference type="Rhea" id="RHEA:23680"/>
        <dbReference type="ChEBI" id="CHEBI:15377"/>
        <dbReference type="ChEBI" id="CHEBI:15378"/>
        <dbReference type="ChEBI" id="CHEBI:43474"/>
        <dbReference type="ChEBI" id="CHEBI:57930"/>
        <dbReference type="ChEBI" id="CHEBI:61557"/>
        <dbReference type="EC" id="3.6.1.15"/>
    </reaction>
</comment>
<comment type="similarity">
    <text evidence="1">Belongs to the THEP1 NTPase family.</text>
</comment>
<feature type="chain" id="PRO_1000046954" description="Nucleoside-triphosphatase THEP1">
    <location>
        <begin position="1"/>
        <end position="179"/>
    </location>
</feature>
<feature type="binding site" evidence="1">
    <location>
        <begin position="7"/>
        <end position="14"/>
    </location>
    <ligand>
        <name>ATP</name>
        <dbReference type="ChEBI" id="CHEBI:30616"/>
    </ligand>
</feature>
<feature type="binding site" evidence="1">
    <location>
        <begin position="94"/>
        <end position="101"/>
    </location>
    <ligand>
        <name>ATP</name>
        <dbReference type="ChEBI" id="CHEBI:30616"/>
    </ligand>
</feature>
<keyword id="KW-0067">ATP-binding</keyword>
<keyword id="KW-0378">Hydrolase</keyword>
<keyword id="KW-0547">Nucleotide-binding</keyword>
<accession>A5IL32</accession>
<evidence type="ECO:0000255" key="1">
    <source>
        <dbReference type="HAMAP-Rule" id="MF_00796"/>
    </source>
</evidence>
<organism>
    <name type="scientific">Thermotoga petrophila (strain ATCC BAA-488 / DSM 13995 / JCM 10881 / RKU-1)</name>
    <dbReference type="NCBI Taxonomy" id="390874"/>
    <lineage>
        <taxon>Bacteria</taxon>
        <taxon>Thermotogati</taxon>
        <taxon>Thermotogota</taxon>
        <taxon>Thermotogae</taxon>
        <taxon>Thermotogales</taxon>
        <taxon>Thermotogaceae</taxon>
        <taxon>Thermotoga</taxon>
    </lineage>
</organism>
<gene>
    <name type="ordered locus">Tpet_0887</name>
</gene>
<name>NTPTH_THEP1</name>
<sequence>MKILITGRPGVGKTTLIKKLSCLLQNAGGFYTEEIRESGKRIGFKIVTLDGEEGILARTDLPFPYRVGKYYVNLKDLEEIGVRSLEGALREKNLIIVDEIGKMELLSSKFREVVEKIFDSEKDVIATIKKSSDPFVERIKSRDGVVVFELNEKNRDSLLKEILYVLKFNRGENNDTGAD</sequence>
<proteinExistence type="inferred from homology"/>
<protein>
    <recommendedName>
        <fullName evidence="1">Nucleoside-triphosphatase THEP1</fullName>
        <shortName evidence="1">NTPase THEP1</shortName>
        <ecNumber evidence="1">3.6.1.15</ecNumber>
    </recommendedName>
    <alternativeName>
        <fullName evidence="1">Nucleoside triphosphate phosphohydrolase</fullName>
    </alternativeName>
</protein>